<feature type="chain" id="PRO_0000187185" description="Protein FAM98A">
    <location>
        <begin position="1"/>
        <end position="515"/>
    </location>
</feature>
<feature type="region of interest" description="Disordered" evidence="2">
    <location>
        <begin position="297"/>
        <end position="410"/>
    </location>
</feature>
<feature type="region of interest" description="Disordered" evidence="2">
    <location>
        <begin position="432"/>
        <end position="515"/>
    </location>
</feature>
<feature type="compositionally biased region" description="Basic and acidic residues" evidence="2">
    <location>
        <begin position="302"/>
        <end position="311"/>
    </location>
</feature>
<feature type="compositionally biased region" description="Gly residues" evidence="2">
    <location>
        <begin position="382"/>
        <end position="394"/>
    </location>
</feature>
<feature type="compositionally biased region" description="Basic and acidic residues" evidence="2">
    <location>
        <begin position="444"/>
        <end position="456"/>
    </location>
</feature>
<feature type="compositionally biased region" description="Gly residues" evidence="2">
    <location>
        <begin position="457"/>
        <end position="481"/>
    </location>
</feature>
<feature type="compositionally biased region" description="Low complexity" evidence="2">
    <location>
        <begin position="485"/>
        <end position="501"/>
    </location>
</feature>
<feature type="compositionally biased region" description="Polar residues" evidence="2">
    <location>
        <begin position="502"/>
        <end position="515"/>
    </location>
</feature>
<reference key="1">
    <citation type="journal article" date="2005" name="Science">
        <title>The transcriptional landscape of the mammalian genome.</title>
        <authorList>
            <person name="Carninci P."/>
            <person name="Kasukawa T."/>
            <person name="Katayama S."/>
            <person name="Gough J."/>
            <person name="Frith M.C."/>
            <person name="Maeda N."/>
            <person name="Oyama R."/>
            <person name="Ravasi T."/>
            <person name="Lenhard B."/>
            <person name="Wells C."/>
            <person name="Kodzius R."/>
            <person name="Shimokawa K."/>
            <person name="Bajic V.B."/>
            <person name="Brenner S.E."/>
            <person name="Batalov S."/>
            <person name="Forrest A.R."/>
            <person name="Zavolan M."/>
            <person name="Davis M.J."/>
            <person name="Wilming L.G."/>
            <person name="Aidinis V."/>
            <person name="Allen J.E."/>
            <person name="Ambesi-Impiombato A."/>
            <person name="Apweiler R."/>
            <person name="Aturaliya R.N."/>
            <person name="Bailey T.L."/>
            <person name="Bansal M."/>
            <person name="Baxter L."/>
            <person name="Beisel K.W."/>
            <person name="Bersano T."/>
            <person name="Bono H."/>
            <person name="Chalk A.M."/>
            <person name="Chiu K.P."/>
            <person name="Choudhary V."/>
            <person name="Christoffels A."/>
            <person name="Clutterbuck D.R."/>
            <person name="Crowe M.L."/>
            <person name="Dalla E."/>
            <person name="Dalrymple B.P."/>
            <person name="de Bono B."/>
            <person name="Della Gatta G."/>
            <person name="di Bernardo D."/>
            <person name="Down T."/>
            <person name="Engstrom P."/>
            <person name="Fagiolini M."/>
            <person name="Faulkner G."/>
            <person name="Fletcher C.F."/>
            <person name="Fukushima T."/>
            <person name="Furuno M."/>
            <person name="Futaki S."/>
            <person name="Gariboldi M."/>
            <person name="Georgii-Hemming P."/>
            <person name="Gingeras T.R."/>
            <person name="Gojobori T."/>
            <person name="Green R.E."/>
            <person name="Gustincich S."/>
            <person name="Harbers M."/>
            <person name="Hayashi Y."/>
            <person name="Hensch T.K."/>
            <person name="Hirokawa N."/>
            <person name="Hill D."/>
            <person name="Huminiecki L."/>
            <person name="Iacono M."/>
            <person name="Ikeo K."/>
            <person name="Iwama A."/>
            <person name="Ishikawa T."/>
            <person name="Jakt M."/>
            <person name="Kanapin A."/>
            <person name="Katoh M."/>
            <person name="Kawasawa Y."/>
            <person name="Kelso J."/>
            <person name="Kitamura H."/>
            <person name="Kitano H."/>
            <person name="Kollias G."/>
            <person name="Krishnan S.P."/>
            <person name="Kruger A."/>
            <person name="Kummerfeld S.K."/>
            <person name="Kurochkin I.V."/>
            <person name="Lareau L.F."/>
            <person name="Lazarevic D."/>
            <person name="Lipovich L."/>
            <person name="Liu J."/>
            <person name="Liuni S."/>
            <person name="McWilliam S."/>
            <person name="Madan Babu M."/>
            <person name="Madera M."/>
            <person name="Marchionni L."/>
            <person name="Matsuda H."/>
            <person name="Matsuzawa S."/>
            <person name="Miki H."/>
            <person name="Mignone F."/>
            <person name="Miyake S."/>
            <person name="Morris K."/>
            <person name="Mottagui-Tabar S."/>
            <person name="Mulder N."/>
            <person name="Nakano N."/>
            <person name="Nakauchi H."/>
            <person name="Ng P."/>
            <person name="Nilsson R."/>
            <person name="Nishiguchi S."/>
            <person name="Nishikawa S."/>
            <person name="Nori F."/>
            <person name="Ohara O."/>
            <person name="Okazaki Y."/>
            <person name="Orlando V."/>
            <person name="Pang K.C."/>
            <person name="Pavan W.J."/>
            <person name="Pavesi G."/>
            <person name="Pesole G."/>
            <person name="Petrovsky N."/>
            <person name="Piazza S."/>
            <person name="Reed J."/>
            <person name="Reid J.F."/>
            <person name="Ring B.Z."/>
            <person name="Ringwald M."/>
            <person name="Rost B."/>
            <person name="Ruan Y."/>
            <person name="Salzberg S.L."/>
            <person name="Sandelin A."/>
            <person name="Schneider C."/>
            <person name="Schoenbach C."/>
            <person name="Sekiguchi K."/>
            <person name="Semple C.A."/>
            <person name="Seno S."/>
            <person name="Sessa L."/>
            <person name="Sheng Y."/>
            <person name="Shibata Y."/>
            <person name="Shimada H."/>
            <person name="Shimada K."/>
            <person name="Silva D."/>
            <person name="Sinclair B."/>
            <person name="Sperling S."/>
            <person name="Stupka E."/>
            <person name="Sugiura K."/>
            <person name="Sultana R."/>
            <person name="Takenaka Y."/>
            <person name="Taki K."/>
            <person name="Tammoja K."/>
            <person name="Tan S.L."/>
            <person name="Tang S."/>
            <person name="Taylor M.S."/>
            <person name="Tegner J."/>
            <person name="Teichmann S.A."/>
            <person name="Ueda H.R."/>
            <person name="van Nimwegen E."/>
            <person name="Verardo R."/>
            <person name="Wei C.L."/>
            <person name="Yagi K."/>
            <person name="Yamanishi H."/>
            <person name="Zabarovsky E."/>
            <person name="Zhu S."/>
            <person name="Zimmer A."/>
            <person name="Hide W."/>
            <person name="Bult C."/>
            <person name="Grimmond S.M."/>
            <person name="Teasdale R.D."/>
            <person name="Liu E.T."/>
            <person name="Brusic V."/>
            <person name="Quackenbush J."/>
            <person name="Wahlestedt C."/>
            <person name="Mattick J.S."/>
            <person name="Hume D.A."/>
            <person name="Kai C."/>
            <person name="Sasaki D."/>
            <person name="Tomaru Y."/>
            <person name="Fukuda S."/>
            <person name="Kanamori-Katayama M."/>
            <person name="Suzuki M."/>
            <person name="Aoki J."/>
            <person name="Arakawa T."/>
            <person name="Iida J."/>
            <person name="Imamura K."/>
            <person name="Itoh M."/>
            <person name="Kato T."/>
            <person name="Kawaji H."/>
            <person name="Kawagashira N."/>
            <person name="Kawashima T."/>
            <person name="Kojima M."/>
            <person name="Kondo S."/>
            <person name="Konno H."/>
            <person name="Nakano K."/>
            <person name="Ninomiya N."/>
            <person name="Nishio T."/>
            <person name="Okada M."/>
            <person name="Plessy C."/>
            <person name="Shibata K."/>
            <person name="Shiraki T."/>
            <person name="Suzuki S."/>
            <person name="Tagami M."/>
            <person name="Waki K."/>
            <person name="Watahiki A."/>
            <person name="Okamura-Oho Y."/>
            <person name="Suzuki H."/>
            <person name="Kawai J."/>
            <person name="Hayashizaki Y."/>
        </authorList>
    </citation>
    <scope>NUCLEOTIDE SEQUENCE [LARGE SCALE MRNA]</scope>
    <source>
        <strain>C57BL/6J</strain>
    </source>
</reference>
<reference key="2">
    <citation type="journal article" date="2004" name="Genome Res.">
        <title>The status, quality, and expansion of the NIH full-length cDNA project: the Mammalian Gene Collection (MGC).</title>
        <authorList>
            <consortium name="The MGC Project Team"/>
        </authorList>
    </citation>
    <scope>NUCLEOTIDE SEQUENCE [LARGE SCALE MRNA]</scope>
    <source>
        <strain>FVB/N</strain>
        <tissue>Mammary tumor</tissue>
    </source>
</reference>
<reference key="3">
    <citation type="journal article" date="2010" name="Cell">
        <title>A tissue-specific atlas of mouse protein phosphorylation and expression.</title>
        <authorList>
            <person name="Huttlin E.L."/>
            <person name="Jedrychowski M.P."/>
            <person name="Elias J.E."/>
            <person name="Goswami T."/>
            <person name="Rad R."/>
            <person name="Beausoleil S.A."/>
            <person name="Villen J."/>
            <person name="Haas W."/>
            <person name="Sowa M.E."/>
            <person name="Gygi S.P."/>
        </authorList>
    </citation>
    <scope>IDENTIFICATION BY MASS SPECTROMETRY [LARGE SCALE ANALYSIS]</scope>
    <source>
        <tissue>Brown adipose tissue</tissue>
        <tissue>Heart</tissue>
        <tissue>Kidney</tissue>
        <tissue>Liver</tissue>
        <tissue>Lung</tissue>
        <tissue>Pancreas</tissue>
        <tissue>Spleen</tissue>
        <tissue>Testis</tissue>
    </source>
</reference>
<reference key="4">
    <citation type="journal article" date="2016" name="JCI Insight">
        <title>PLEKHM1/DEF8/RAB7 complex regulates lysosome positioning and bone homeostasis.</title>
        <authorList>
            <person name="Fujiwara T."/>
            <person name="Ye S."/>
            <person name="Castro-Gomes T."/>
            <person name="Winchell C.G."/>
            <person name="Andrews N.W."/>
            <person name="Voth D.E."/>
            <person name="Varughese K.I."/>
            <person name="Mackintosh S.G."/>
            <person name="Feng Y."/>
            <person name="Pavlos N."/>
            <person name="Nakamura T."/>
            <person name="Manolagas S.C."/>
            <person name="Zhao H."/>
        </authorList>
    </citation>
    <scope>FUNCTION</scope>
    <scope>INTERACTION WITH PLEKHM1</scope>
</reference>
<dbReference type="EMBL" id="AK167224">
    <property type="protein sequence ID" value="BAE39349.1"/>
    <property type="molecule type" value="mRNA"/>
</dbReference>
<dbReference type="EMBL" id="BC004626">
    <property type="protein sequence ID" value="AAH04626.1"/>
    <property type="status" value="ALT_INIT"/>
    <property type="molecule type" value="mRNA"/>
</dbReference>
<dbReference type="CCDS" id="CCDS28974.2"/>
<dbReference type="RefSeq" id="NP_598508.2">
    <property type="nucleotide sequence ID" value="NM_133747.2"/>
</dbReference>
<dbReference type="SMR" id="Q3TJZ6"/>
<dbReference type="BioGRID" id="215533">
    <property type="interactions" value="14"/>
</dbReference>
<dbReference type="FunCoup" id="Q3TJZ6">
    <property type="interactions" value="533"/>
</dbReference>
<dbReference type="IntAct" id="Q3TJZ6">
    <property type="interactions" value="5"/>
</dbReference>
<dbReference type="MINT" id="Q3TJZ6"/>
<dbReference type="STRING" id="10090.ENSMUSP00000108126"/>
<dbReference type="GlyGen" id="Q3TJZ6">
    <property type="glycosylation" value="2 sites, 1 O-linked glycan (2 sites)"/>
</dbReference>
<dbReference type="iPTMnet" id="Q3TJZ6"/>
<dbReference type="PhosphoSitePlus" id="Q3TJZ6"/>
<dbReference type="SwissPalm" id="Q3TJZ6"/>
<dbReference type="jPOST" id="Q3TJZ6"/>
<dbReference type="PaxDb" id="10090-ENSMUSP00000108126"/>
<dbReference type="PeptideAtlas" id="Q3TJZ6"/>
<dbReference type="ProteomicsDB" id="271851"/>
<dbReference type="Pumba" id="Q3TJZ6"/>
<dbReference type="Antibodypedia" id="29272">
    <property type="antibodies" value="108 antibodies from 19 providers"/>
</dbReference>
<dbReference type="Ensembl" id="ENSMUST00000112507.4">
    <property type="protein sequence ID" value="ENSMUSP00000108126.4"/>
    <property type="gene ID" value="ENSMUSG00000002017.11"/>
</dbReference>
<dbReference type="GeneID" id="72722"/>
<dbReference type="KEGG" id="mmu:72722"/>
<dbReference type="UCSC" id="uc008doq.1">
    <property type="organism name" value="mouse"/>
</dbReference>
<dbReference type="AGR" id="MGI:1919972"/>
<dbReference type="CTD" id="25940"/>
<dbReference type="MGI" id="MGI:1919972">
    <property type="gene designation" value="Fam98a"/>
</dbReference>
<dbReference type="VEuPathDB" id="HostDB:ENSMUSG00000002017"/>
<dbReference type="eggNOG" id="KOG3973">
    <property type="taxonomic scope" value="Eukaryota"/>
</dbReference>
<dbReference type="GeneTree" id="ENSGT00440000037341"/>
<dbReference type="HOGENOM" id="CLU_038408_1_2_1"/>
<dbReference type="InParanoid" id="Q3TJZ6"/>
<dbReference type="OMA" id="TEKQWFA"/>
<dbReference type="OrthoDB" id="512356at2759"/>
<dbReference type="PhylomeDB" id="Q3TJZ6"/>
<dbReference type="BioGRID-ORCS" id="72722">
    <property type="hits" value="0 hits in 80 CRISPR screens"/>
</dbReference>
<dbReference type="ChiTaRS" id="Fam98a">
    <property type="organism name" value="mouse"/>
</dbReference>
<dbReference type="PRO" id="PR:Q3TJZ6"/>
<dbReference type="Proteomes" id="UP000000589">
    <property type="component" value="Chromosome 17"/>
</dbReference>
<dbReference type="RNAct" id="Q3TJZ6">
    <property type="molecule type" value="protein"/>
</dbReference>
<dbReference type="Bgee" id="ENSMUSG00000002017">
    <property type="expression patterns" value="Expressed in saccule of membranous labyrinth and 263 other cell types or tissues"/>
</dbReference>
<dbReference type="ExpressionAtlas" id="Q3TJZ6">
    <property type="expression patterns" value="baseline and differential"/>
</dbReference>
<dbReference type="GO" id="GO:0008276">
    <property type="term" value="F:protein methyltransferase activity"/>
    <property type="evidence" value="ECO:0000250"/>
    <property type="project" value="UniProtKB"/>
</dbReference>
<dbReference type="GO" id="GO:0032418">
    <property type="term" value="P:lysosome localization"/>
    <property type="evidence" value="ECO:0000315"/>
    <property type="project" value="UniProtKB"/>
</dbReference>
<dbReference type="GO" id="GO:0008284">
    <property type="term" value="P:positive regulation of cell population proliferation"/>
    <property type="evidence" value="ECO:0000250"/>
    <property type="project" value="UniProtKB"/>
</dbReference>
<dbReference type="GO" id="GO:0010628">
    <property type="term" value="P:positive regulation of gene expression"/>
    <property type="evidence" value="ECO:0000250"/>
    <property type="project" value="UniProtKB"/>
</dbReference>
<dbReference type="GO" id="GO:1900029">
    <property type="term" value="P:positive regulation of ruffle assembly"/>
    <property type="evidence" value="ECO:0000315"/>
    <property type="project" value="UniProtKB"/>
</dbReference>
<dbReference type="GO" id="GO:0006479">
    <property type="term" value="P:protein methylation"/>
    <property type="evidence" value="ECO:0000250"/>
    <property type="project" value="UniProtKB"/>
</dbReference>
<dbReference type="InterPro" id="IPR018797">
    <property type="entry name" value="FAM98"/>
</dbReference>
<dbReference type="PANTHER" id="PTHR31353">
    <property type="entry name" value="FAM98"/>
    <property type="match status" value="1"/>
</dbReference>
<dbReference type="PANTHER" id="PTHR31353:SF9">
    <property type="entry name" value="PROTEIN FAM98A"/>
    <property type="match status" value="1"/>
</dbReference>
<dbReference type="Pfam" id="PF10239">
    <property type="entry name" value="DUF2465"/>
    <property type="match status" value="1"/>
</dbReference>
<accession>Q3TJZ6</accession>
<accession>Q99KJ2</accession>
<keyword id="KW-1185">Reference proteome</keyword>
<proteinExistence type="evidence at protein level"/>
<gene>
    <name evidence="5" type="primary">Fam98a</name>
</gene>
<name>FA98A_MOUSE</name>
<sequence length="515" mass="55055">MECDLMETDILESLEDLGYKGPLLDDGALLQAVSAGAASPEFTKLCAWLVSELRVLCKLEENVQATNSPSEAEEFQLEVSGLLGEMNCPYPSLTSGDVTKRLLVEKNCLLLLTYLISELEAARMLCVNAPPKKAQEGGGSEVFQELKGICIALGMSKPPANITMFQFFSGIEKKLKETLAKVPPNHVGKPLLKKPMGPAHWEKIEAINQAIANEYEVRRKLLIKRLDVTVQSFGWSDRAKSQTDKLAKVYQPKRSLLSPKGKVSVAHLLAARQDLSKILRTSSGSIREKTACAINKVLMGRVPDRGGRPNEIEPPPPEMPPWQKRQDGPQQQAGGRGGGRGGYEHSSYGGRGGHEQGGRGGRGSYDHGGRGGGRGNKHQGGWTDGGSGSGGGYQDGAYRDSGFQPGGYHGGHSGGYQAGGYGGFQTSSYTGSGYQGGGYQQDNRYQDGGHHGERGSGRGGRGGRGGRGGRGSQGGGWGGRGSQTYHQGGQFEQHFQHGGYQYSHSGFGQGRHYTS</sequence>
<protein>
    <recommendedName>
        <fullName evidence="4">Protein FAM98A</fullName>
    </recommendedName>
</protein>
<comment type="function">
    <text evidence="1 3">Positively stimulates PRMT1-induced protein arginine methylation (By similarity). Involved in skeletal homeostasis (PubMed:27777970). Positively regulates lysosome peripheral distribution and ruffled border formation in osteoclasts (PubMed:27777970).</text>
</comment>
<comment type="subunit">
    <text evidence="1 3">Interacts (via N- and C-terminus) with DDX1 (By similarity). Interacts (via N- and C-terminus) with C14orf166 (By similarity). Interacts with FAM98B (By similarity). Interacts with PLEKHM1 (via N- and C-terminus) (PubMed:27777970).</text>
</comment>
<comment type="similarity">
    <text evidence="4">Belongs to the FAM98 family.</text>
</comment>
<comment type="sequence caution" evidence="4">
    <conflict type="erroneous initiation">
        <sequence resource="EMBL-CDS" id="AAH04626"/>
    </conflict>
</comment>
<organism>
    <name type="scientific">Mus musculus</name>
    <name type="common">Mouse</name>
    <dbReference type="NCBI Taxonomy" id="10090"/>
    <lineage>
        <taxon>Eukaryota</taxon>
        <taxon>Metazoa</taxon>
        <taxon>Chordata</taxon>
        <taxon>Craniata</taxon>
        <taxon>Vertebrata</taxon>
        <taxon>Euteleostomi</taxon>
        <taxon>Mammalia</taxon>
        <taxon>Eutheria</taxon>
        <taxon>Euarchontoglires</taxon>
        <taxon>Glires</taxon>
        <taxon>Rodentia</taxon>
        <taxon>Myomorpha</taxon>
        <taxon>Muroidea</taxon>
        <taxon>Muridae</taxon>
        <taxon>Murinae</taxon>
        <taxon>Mus</taxon>
        <taxon>Mus</taxon>
    </lineage>
</organism>
<evidence type="ECO:0000250" key="1">
    <source>
        <dbReference type="UniProtKB" id="Q8NCA5"/>
    </source>
</evidence>
<evidence type="ECO:0000256" key="2">
    <source>
        <dbReference type="SAM" id="MobiDB-lite"/>
    </source>
</evidence>
<evidence type="ECO:0000269" key="3">
    <source>
    </source>
</evidence>
<evidence type="ECO:0000305" key="4"/>
<evidence type="ECO:0000312" key="5">
    <source>
        <dbReference type="MGI" id="MGI:1919972"/>
    </source>
</evidence>